<sequence length="512" mass="58751">MGEYQLHQSRNLSVNQTLDEILGISRKSETTTTSSGSSGAEKNALNSPIRPPTRHGRESSGSNEENKDPIQLENGNGSTLSFLTSSSSATSSTAARRNSDDDFIKKLNDIRRRSLISTMDATSTPTTSVPIHFDSPRRESRPCLEIHVEESPEELSTHAVEITEFHRDLSENSLGTSTDHEDPSLTFRVDKELEQSESKKTTKRPASGVKKTLKASISIDAPKPKPRPRPQTSANLSTKTIKDKDQEMMQMSMFGSKLNKPSDAHHKEWLQKKEREIREKKAKEKAAAEQKAATEKERRENSAKLYQRWVQDHDKKAKELKSKKTQQERKKSENEKTTQDQKLKEAEKNYEMWKRERSKSVTDIRKKLEQEEDKKRKKEEEAKNEKIKEAQAAFLAWKRKKEELLNEEAEKLKKEQVQKQLEESEKMTRLSLANEAYETWIELKESEREFIADFVLIEAPPIPWLPPSNLIPRQFVRSSNGNRLRARSQSAKSIAKRSRSRPGTTTSLRPFR</sequence>
<name>MAP9_CAEEL</name>
<proteinExistence type="evidence at transcript level"/>
<organism evidence="6">
    <name type="scientific">Caenorhabditis elegans</name>
    <dbReference type="NCBI Taxonomy" id="6239"/>
    <lineage>
        <taxon>Eukaryota</taxon>
        <taxon>Metazoa</taxon>
        <taxon>Ecdysozoa</taxon>
        <taxon>Nematoda</taxon>
        <taxon>Chromadorea</taxon>
        <taxon>Rhabditida</taxon>
        <taxon>Rhabditina</taxon>
        <taxon>Rhabditomorpha</taxon>
        <taxon>Rhabditoidea</taxon>
        <taxon>Rhabditidae</taxon>
        <taxon>Peloderinae</taxon>
        <taxon>Caenorhabditis</taxon>
    </lineage>
</organism>
<comment type="subcellular location">
    <subcellularLocation>
        <location evidence="3">Cell projection</location>
        <location evidence="3">Cilium</location>
    </subcellularLocation>
    <subcellularLocation>
        <location evidence="3">Cytoplasm</location>
        <location evidence="3">Cytoskeleton</location>
        <location evidence="3">Cilium axoneme</location>
    </subcellularLocation>
    <text evidence="3">Localizes to the base of the cilium.</text>
</comment>
<comment type="tissue specificity">
    <text evidence="3">Expressed in amphid and phasmid ciliated neurons.</text>
</comment>
<gene>
    <name evidence="4" type="primary">maph-9</name>
    <name evidence="7" type="ORF">C34D4.1</name>
</gene>
<protein>
    <recommendedName>
        <fullName evidence="5">Protein maph-9</fullName>
    </recommendedName>
</protein>
<feature type="chain" id="PRO_0000439161" description="Protein maph-9" evidence="5">
    <location>
        <begin position="1"/>
        <end position="512"/>
    </location>
</feature>
<feature type="region of interest" description="Disordered" evidence="2">
    <location>
        <begin position="24"/>
        <end position="103"/>
    </location>
</feature>
<feature type="region of interest" description="Disordered" evidence="2">
    <location>
        <begin position="168"/>
        <end position="386"/>
    </location>
</feature>
<feature type="region of interest" description="Disordered" evidence="2">
    <location>
        <begin position="481"/>
        <end position="512"/>
    </location>
</feature>
<feature type="coiled-coil region" evidence="1">
    <location>
        <begin position="267"/>
        <end position="429"/>
    </location>
</feature>
<feature type="compositionally biased region" description="Low complexity" evidence="2">
    <location>
        <begin position="30"/>
        <end position="39"/>
    </location>
</feature>
<feature type="compositionally biased region" description="Low complexity" evidence="2">
    <location>
        <begin position="78"/>
        <end position="95"/>
    </location>
</feature>
<feature type="compositionally biased region" description="Basic and acidic residues" evidence="2">
    <location>
        <begin position="178"/>
        <end position="200"/>
    </location>
</feature>
<feature type="compositionally biased region" description="Polar residues" evidence="2">
    <location>
        <begin position="230"/>
        <end position="239"/>
    </location>
</feature>
<feature type="compositionally biased region" description="Basic and acidic residues" evidence="2">
    <location>
        <begin position="260"/>
        <end position="302"/>
    </location>
</feature>
<feature type="compositionally biased region" description="Basic and acidic residues" evidence="2">
    <location>
        <begin position="310"/>
        <end position="386"/>
    </location>
</feature>
<feature type="compositionally biased region" description="Polar residues" evidence="2">
    <location>
        <begin position="502"/>
        <end position="512"/>
    </location>
</feature>
<evidence type="ECO:0000255" key="1"/>
<evidence type="ECO:0000256" key="2">
    <source>
        <dbReference type="SAM" id="MobiDB-lite"/>
    </source>
</evidence>
<evidence type="ECO:0000269" key="3">
    <source>
    </source>
</evidence>
<evidence type="ECO:0000303" key="4">
    <source>
    </source>
</evidence>
<evidence type="ECO:0000305" key="5"/>
<evidence type="ECO:0000312" key="6">
    <source>
        <dbReference type="Proteomes" id="UP000001940"/>
    </source>
</evidence>
<evidence type="ECO:0000312" key="7">
    <source>
        <dbReference type="WormBase" id="C34D4.1"/>
    </source>
</evidence>
<dbReference type="EMBL" id="BX284604">
    <property type="protein sequence ID" value="CCD66597.1"/>
    <property type="molecule type" value="Genomic_DNA"/>
</dbReference>
<dbReference type="PIR" id="T29291">
    <property type="entry name" value="T29291"/>
</dbReference>
<dbReference type="RefSeq" id="NP_501126.1">
    <property type="nucleotide sequence ID" value="NM_068725.6"/>
</dbReference>
<dbReference type="SMR" id="Q18452"/>
<dbReference type="FunCoup" id="Q18452">
    <property type="interactions" value="287"/>
</dbReference>
<dbReference type="STRING" id="6239.C34D4.1.1"/>
<dbReference type="PaxDb" id="6239-C34D4.1"/>
<dbReference type="EnsemblMetazoa" id="C34D4.1.1">
    <property type="protein sequence ID" value="C34D4.1.1"/>
    <property type="gene ID" value="WBGene00016397"/>
</dbReference>
<dbReference type="EnsemblMetazoa" id="C34D4.1.2">
    <property type="protein sequence ID" value="C34D4.1.2"/>
    <property type="gene ID" value="WBGene00016397"/>
</dbReference>
<dbReference type="GeneID" id="177490"/>
<dbReference type="KEGG" id="cel:CELE_C34D4.1"/>
<dbReference type="UCSC" id="C34D4.1">
    <property type="organism name" value="c. elegans"/>
</dbReference>
<dbReference type="AGR" id="WB:WBGene00016397"/>
<dbReference type="CTD" id="177490"/>
<dbReference type="WormBase" id="C34D4.1">
    <property type="protein sequence ID" value="CE27742"/>
    <property type="gene ID" value="WBGene00016397"/>
    <property type="gene designation" value="maph-9"/>
</dbReference>
<dbReference type="eggNOG" id="ENOG502RT65">
    <property type="taxonomic scope" value="Eukaryota"/>
</dbReference>
<dbReference type="GeneTree" id="ENSGT00730000111184"/>
<dbReference type="HOGENOM" id="CLU_512144_0_0_1"/>
<dbReference type="InParanoid" id="Q18452"/>
<dbReference type="OMA" id="NEENKDP"/>
<dbReference type="OrthoDB" id="5877408at2759"/>
<dbReference type="PRO" id="PR:Q18452"/>
<dbReference type="Proteomes" id="UP000001940">
    <property type="component" value="Chromosome IV"/>
</dbReference>
<dbReference type="Bgee" id="WBGene00016397">
    <property type="expression patterns" value="Expressed in pharyngeal muscle cell (C elegans) and 3 other cell types or tissues"/>
</dbReference>
<dbReference type="GO" id="GO:0000235">
    <property type="term" value="C:astral microtubule"/>
    <property type="evidence" value="ECO:0000318"/>
    <property type="project" value="GO_Central"/>
</dbReference>
<dbReference type="GO" id="GO:0005930">
    <property type="term" value="C:axoneme"/>
    <property type="evidence" value="ECO:0000314"/>
    <property type="project" value="UniProtKB"/>
</dbReference>
<dbReference type="GO" id="GO:0097546">
    <property type="term" value="C:ciliary base"/>
    <property type="evidence" value="ECO:0000314"/>
    <property type="project" value="UniProtKB"/>
</dbReference>
<dbReference type="GO" id="GO:0008017">
    <property type="term" value="F:microtubule binding"/>
    <property type="evidence" value="ECO:0000318"/>
    <property type="project" value="GO_Central"/>
</dbReference>
<dbReference type="GO" id="GO:0000281">
    <property type="term" value="P:mitotic cytokinesis"/>
    <property type="evidence" value="ECO:0007669"/>
    <property type="project" value="InterPro"/>
</dbReference>
<dbReference type="GO" id="GO:0090307">
    <property type="term" value="P:mitotic spindle assembly"/>
    <property type="evidence" value="ECO:0000318"/>
    <property type="project" value="GO_Central"/>
</dbReference>
<dbReference type="GO" id="GO:1902412">
    <property type="term" value="P:regulation of mitotic cytokinesis"/>
    <property type="evidence" value="ECO:0000318"/>
    <property type="project" value="GO_Central"/>
</dbReference>
<dbReference type="InterPro" id="IPR026106">
    <property type="entry name" value="MAP9"/>
</dbReference>
<dbReference type="PANTHER" id="PTHR14739">
    <property type="entry name" value="MICROTUBULE-ASSOCIATED PROTEIN 9"/>
    <property type="match status" value="1"/>
</dbReference>
<dbReference type="PANTHER" id="PTHR14739:SF9">
    <property type="entry name" value="MICROTUBULE-ASSOCIATED PROTEIN 9"/>
    <property type="match status" value="1"/>
</dbReference>
<accession>Q18452</accession>
<keyword id="KW-0966">Cell projection</keyword>
<keyword id="KW-0969">Cilium</keyword>
<keyword id="KW-0175">Coiled coil</keyword>
<keyword id="KW-0963">Cytoplasm</keyword>
<keyword id="KW-0206">Cytoskeleton</keyword>
<keyword id="KW-1185">Reference proteome</keyword>
<reference evidence="6" key="1">
    <citation type="journal article" date="1998" name="Science">
        <title>Genome sequence of the nematode C. elegans: a platform for investigating biology.</title>
        <authorList>
            <consortium name="The C. elegans sequencing consortium"/>
        </authorList>
    </citation>
    <scope>NUCLEOTIDE SEQUENCE [LARGE SCALE GENOMIC DNA]</scope>
    <source>
        <strain evidence="6">Bristol N2</strain>
    </source>
</reference>
<reference evidence="5" key="2">
    <citation type="journal article" date="2016" name="PLoS Genet.">
        <title>Whole-organism developmental expression profiling identifies rab-28 as a novel ciliary GTPase associated with the BBSome and intraflagellar transport.</title>
        <authorList>
            <person name="Jensen V.L."/>
            <person name="Carter S."/>
            <person name="Sanders A.A."/>
            <person name="Li C."/>
            <person name="Kennedy J."/>
            <person name="Timbers T.A."/>
            <person name="Cai J."/>
            <person name="Scheidel N."/>
            <person name="Kennedy B.N."/>
            <person name="Morin R.D."/>
            <person name="Leroux M.R."/>
            <person name="Blacque O.E."/>
        </authorList>
    </citation>
    <scope>SUBCELLULAR LOCATION</scope>
    <scope>TISSUE SPECIFICITY</scope>
</reference>